<feature type="chain" id="PRO_0000449208" description="Immunity protein TsiV2">
    <location>
        <begin position="1"/>
        <end position="242"/>
    </location>
</feature>
<feature type="transmembrane region" description="Helical" evidence="1">
    <location>
        <begin position="39"/>
        <end position="59"/>
    </location>
</feature>
<feature type="transmembrane region" description="Helical" evidence="1">
    <location>
        <begin position="66"/>
        <end position="86"/>
    </location>
</feature>
<feature type="transmembrane region" description="Helical" evidence="1">
    <location>
        <begin position="118"/>
        <end position="138"/>
    </location>
</feature>
<comment type="function">
    <text evidence="2">Immunity protein that plays a role in preventing early activation of toxin VasX.</text>
</comment>
<comment type="subcellular location">
    <subcellularLocation>
        <location evidence="1">Host membrane</location>
        <topology evidence="1">Multi-pass membrane protein</topology>
    </subcellularLocation>
</comment>
<comment type="disruption phenotype">
    <text evidence="2">Deletion mutant is susceptible to killing by V52 strain in a VasX-dependent manner.</text>
</comment>
<evidence type="ECO:0000255" key="1"/>
<evidence type="ECO:0000269" key="2">
    <source>
    </source>
</evidence>
<evidence type="ECO:0000303" key="3">
    <source>
    </source>
</evidence>
<organism>
    <name type="scientific">Vibrio cholerae serotype O1 (strain ATCC 39315 / El Tor Inaba N16961)</name>
    <dbReference type="NCBI Taxonomy" id="243277"/>
    <lineage>
        <taxon>Bacteria</taxon>
        <taxon>Pseudomonadati</taxon>
        <taxon>Pseudomonadota</taxon>
        <taxon>Gammaproteobacteria</taxon>
        <taxon>Vibrionales</taxon>
        <taxon>Vibrionaceae</taxon>
        <taxon>Vibrio</taxon>
    </lineage>
</organism>
<sequence length="242" mass="27881">MLIDKNELEQLKVKLHSSEVIYQWDSVAYGERRSEIFRVFGAISAGIVPLWPFIFFADIQFNSKEFWGFICFSLAGMAAARYLFMPDHRYCYSLTQAGIYYTDQEVIPDAAYTFVRGFAWVGIAVCLLALAVVGPLAFVGAGGFALLAFGLTNFHPTVHKKEVYFADQLIVFDPIKEKMVDLNTDSTDEPWFDRRLFFSSLDEKTHFIELVKSIHNNVDYLPLQRVNDQYKHPIFNQELKEE</sequence>
<dbReference type="EMBL" id="AE003853">
    <property type="protein sequence ID" value="AAF95935.1"/>
    <property type="molecule type" value="Genomic_DNA"/>
</dbReference>
<dbReference type="PIR" id="A82512">
    <property type="entry name" value="A82512"/>
</dbReference>
<dbReference type="RefSeq" id="NP_232422.1">
    <property type="nucleotide sequence ID" value="NC_002506.1"/>
</dbReference>
<dbReference type="RefSeq" id="WP_000904079.1">
    <property type="nucleotide sequence ID" value="NZ_LT906615.1"/>
</dbReference>
<dbReference type="STRING" id="243277.VC_A0021"/>
<dbReference type="TCDB" id="1.C.131.1.1">
    <property type="family name" value="the vasx toxin (vasx) family"/>
</dbReference>
<dbReference type="DNASU" id="2612522"/>
<dbReference type="EnsemblBacteria" id="AAF95935">
    <property type="protein sequence ID" value="AAF95935"/>
    <property type="gene ID" value="VC_A0021"/>
</dbReference>
<dbReference type="KEGG" id="vch:VC_A0021"/>
<dbReference type="PATRIC" id="fig|243277.26.peg.2668"/>
<dbReference type="eggNOG" id="ENOG502ZEUJ">
    <property type="taxonomic scope" value="Bacteria"/>
</dbReference>
<dbReference type="HOGENOM" id="CLU_100876_0_0_6"/>
<dbReference type="Proteomes" id="UP000000584">
    <property type="component" value="Chromosome 2"/>
</dbReference>
<dbReference type="GO" id="GO:0033644">
    <property type="term" value="C:host cell membrane"/>
    <property type="evidence" value="ECO:0007669"/>
    <property type="project" value="UniProtKB-SubCell"/>
</dbReference>
<dbReference type="GO" id="GO:0016020">
    <property type="term" value="C:membrane"/>
    <property type="evidence" value="ECO:0007669"/>
    <property type="project" value="UniProtKB-KW"/>
</dbReference>
<proteinExistence type="inferred from homology"/>
<name>TSIV2_VIBCH</name>
<protein>
    <recommendedName>
        <fullName evidence="3">Immunity protein TsiV2</fullName>
    </recommendedName>
</protein>
<gene>
    <name evidence="3" type="primary">tsiV2</name>
    <name type="ordered locus">VC_A0021</name>
</gene>
<keyword id="KW-1043">Host membrane</keyword>
<keyword id="KW-0472">Membrane</keyword>
<keyword id="KW-1185">Reference proteome</keyword>
<keyword id="KW-0812">Transmembrane</keyword>
<keyword id="KW-1133">Transmembrane helix</keyword>
<reference key="1">
    <citation type="journal article" date="2000" name="Nature">
        <title>DNA sequence of both chromosomes of the cholera pathogen Vibrio cholerae.</title>
        <authorList>
            <person name="Heidelberg J.F."/>
            <person name="Eisen J.A."/>
            <person name="Nelson W.C."/>
            <person name="Clayton R.A."/>
            <person name="Gwinn M.L."/>
            <person name="Dodson R.J."/>
            <person name="Haft D.H."/>
            <person name="Hickey E.K."/>
            <person name="Peterson J.D."/>
            <person name="Umayam L.A."/>
            <person name="Gill S.R."/>
            <person name="Nelson K.E."/>
            <person name="Read T.D."/>
            <person name="Tettelin H."/>
            <person name="Richardson D.L."/>
            <person name="Ermolaeva M.D."/>
            <person name="Vamathevan J.J."/>
            <person name="Bass S."/>
            <person name="Qin H."/>
            <person name="Dragoi I."/>
            <person name="Sellers P."/>
            <person name="McDonald L.A."/>
            <person name="Utterback T.R."/>
            <person name="Fleischmann R.D."/>
            <person name="Nierman W.C."/>
            <person name="White O."/>
            <person name="Salzberg S.L."/>
            <person name="Smith H.O."/>
            <person name="Colwell R.R."/>
            <person name="Mekalanos J.J."/>
            <person name="Venter J.C."/>
            <person name="Fraser C.M."/>
        </authorList>
    </citation>
    <scope>NUCLEOTIDE SEQUENCE [LARGE SCALE GENOMIC DNA]</scope>
    <source>
        <strain>ATCC 39315 / El Tor Inaba N16961</strain>
    </source>
</reference>
<reference key="2">
    <citation type="journal article" date="2013" name="PLoS Pathog.">
        <title>Dual expression profile of type VI secretion system immunity genes protects pandemic Vibrio cholerae.</title>
        <authorList>
            <person name="Miyata S.T."/>
            <person name="Unterweger D."/>
            <person name="Rudko S.P."/>
            <person name="Pukatzki S."/>
        </authorList>
    </citation>
    <scope>FUNCTION</scope>
    <scope>DISRUPTION PHENOTYPE</scope>
</reference>
<accession>Q9KNE4</accession>